<name>ANM13_ARATH</name>
<sequence length="535" mass="59915">MEVSSVKKLEQLEYSLESVTDLSSSSVSSSSPAVATFSYVDGVTELRFLQSDSTHCFNFDLASAQLFKLGPVHFICVSDGSSSSEEKSFSKGVNIKFKNEKDSKDFCESFEEWRNDSVVQGSSLQNGTVSANKSKFDNKIEASSAKMYFHYYGQLLHQQNMLQDYVRTGTYYAAVMENHSDFAGRVVVDVGAGSGILSMFAAQAGAKHVYAVEASEMAEYARKLIAGNPLFADRITVIKGKVEDIELPEKADILISEPMGTLLVNERMLESYVIARDRFMTPKGKMFPTVGRIHMAPFSDEFLFIEMANKAMFWQQQNYYGVDLTPLYGSAHQGYFSQPVVDAFDPRLLVASPMFHMIDFTQMKEEDFYEIDIPLKFTASMCTRMHGLACWFDVLFDGSTVQRWLTTAPGAPTTHWYQIRCVLSQPIYVMAGQEITGRLHLIAHSAQSYTIDLTLSAKMWGPGASQGGILQSSTCKFDLKEPYYRMSQPQAYPVAQEPPLQPQPELSTQQDIQTPNDELEEELLQQLPQNPSAQL</sequence>
<keyword id="KW-0007">Acetylation</keyword>
<keyword id="KW-0010">Activator</keyword>
<keyword id="KW-0025">Alternative splicing</keyword>
<keyword id="KW-0156">Chromatin regulator</keyword>
<keyword id="KW-0963">Cytoplasm</keyword>
<keyword id="KW-0489">Methyltransferase</keyword>
<keyword id="KW-0539">Nucleus</keyword>
<keyword id="KW-1185">Reference proteome</keyword>
<keyword id="KW-0949">S-adenosyl-L-methionine</keyword>
<keyword id="KW-0346">Stress response</keyword>
<keyword id="KW-0804">Transcription</keyword>
<keyword id="KW-0805">Transcription regulation</keyword>
<keyword id="KW-0808">Transferase</keyword>
<keyword id="KW-0832">Ubl conjugation</keyword>
<comment type="function">
    <text evidence="5 8">Methylates (mono- and asymmetric dimethylation) the guanidino nitrogens of arginyl residues in several proteins involved in DNA packaging, transcription regulation, and mRNA stability (By similarity). Recruited to promoters upon gene activation, methylates histone H3 and activates transcription via chromatin remodeling (PubMed:27676073). Positive regulator in the oxidative stress tolerance that promotes the expression of enzymes preventing oxidative stress such as APX1 and GPX1 by histone methylation (H3R17me2a). Confers tolerance to cadmium CdCl(2) and salt NaCl stresses (PubMed:27676073).</text>
</comment>
<comment type="catalytic activity">
    <reaction evidence="4">
        <text>L-arginyl-[protein] + 2 S-adenosyl-L-methionine = N(omega),N(omega)-dimethyl-L-arginyl-[protein] + 2 S-adenosyl-L-homocysteine + 2 H(+)</text>
        <dbReference type="Rhea" id="RHEA:48096"/>
        <dbReference type="Rhea" id="RHEA-COMP:10532"/>
        <dbReference type="Rhea" id="RHEA-COMP:11991"/>
        <dbReference type="ChEBI" id="CHEBI:15378"/>
        <dbReference type="ChEBI" id="CHEBI:29965"/>
        <dbReference type="ChEBI" id="CHEBI:57856"/>
        <dbReference type="ChEBI" id="CHEBI:59789"/>
        <dbReference type="ChEBI" id="CHEBI:61897"/>
        <dbReference type="EC" id="2.1.1.319"/>
    </reaction>
</comment>
<comment type="subunit">
    <text evidence="8">Interacts with PQT3 in the nucleus.</text>
</comment>
<comment type="subcellular location">
    <subcellularLocation>
        <location evidence="8">Nucleus</location>
    </subcellularLocation>
    <subcellularLocation>
        <location evidence="1">Cytoplasm</location>
    </subcellularLocation>
</comment>
<comment type="alternative products">
    <event type="alternative splicing"/>
    <isoform>
        <id>Q84W92-1</id>
        <name>1</name>
        <sequence type="displayed"/>
    </isoform>
    <isoform>
        <id>Q84W92-3</id>
        <name>2</name>
        <sequence type="described" ref="VSP_027461"/>
    </isoform>
</comment>
<comment type="induction">
    <text evidence="8">Targeted by PQT3 to degradation via 26S proteasome. Induced by proteasome inhibitor MG132 treatment (at protein level).</text>
</comment>
<comment type="PTM">
    <text evidence="8">Ubiquitinated by PQT3.</text>
</comment>
<comment type="disruption phenotype">
    <text evidence="8">Increased sensitivity to paraquat-triggered oxidative stress. Slower root elongation after cadmium ion CdCl(2) treatment. Decreased histone H3 methylation (H3R17me2a) leading to reduced levels of APX1 and GPX1.</text>
</comment>
<comment type="miscellaneous">
    <molecule>Isoform 2</molecule>
    <text evidence="10">May be due to competing acceptor splice site.</text>
</comment>
<comment type="similarity">
    <text evidence="6">Belongs to the class I-like SAM-binding methyltransferase superfamily. Protein arginine N-methyltransferase family.</text>
</comment>
<comment type="sequence caution" evidence="10">
    <conflict type="erroneous gene model prediction">
        <sequence resource="EMBL-CDS" id="AAF26997"/>
    </conflict>
</comment>
<comment type="sequence caution" evidence="10">
    <conflict type="miscellaneous discrepancy">
        <sequence resource="EMBL-CDS" id="BAF00156"/>
    </conflict>
    <text>Chimeric cDNA. Its C-terminal part is derived from gene At1g80500, which oded for an intracellular transporter.</text>
</comment>
<proteinExistence type="evidence at protein level"/>
<gene>
    <name type="primary">PRMT13</name>
    <name type="synonym">CARM1A</name>
    <name type="synonym">PRMT4B</name>
    <name evidence="11" type="ordered locus">At3g06930</name>
    <name evidence="12" type="ORF">F17A9.8</name>
</gene>
<accession>Q84W92</accession>
<accession>Q0WRU3</accession>
<accession>Q66GI8</accession>
<accession>Q9M906</accession>
<organism>
    <name type="scientific">Arabidopsis thaliana</name>
    <name type="common">Mouse-ear cress</name>
    <dbReference type="NCBI Taxonomy" id="3702"/>
    <lineage>
        <taxon>Eukaryota</taxon>
        <taxon>Viridiplantae</taxon>
        <taxon>Streptophyta</taxon>
        <taxon>Embryophyta</taxon>
        <taxon>Tracheophyta</taxon>
        <taxon>Spermatophyta</taxon>
        <taxon>Magnoliopsida</taxon>
        <taxon>eudicotyledons</taxon>
        <taxon>Gunneridae</taxon>
        <taxon>Pentapetalae</taxon>
        <taxon>rosids</taxon>
        <taxon>malvids</taxon>
        <taxon>Brassicales</taxon>
        <taxon>Brassicaceae</taxon>
        <taxon>Camelineae</taxon>
        <taxon>Arabidopsis</taxon>
    </lineage>
</organism>
<feature type="chain" id="PRO_0000294004" description="Probable histone-arginine methyltransferase 1.3">
    <location>
        <begin position="1"/>
        <end position="535"/>
    </location>
</feature>
<feature type="domain" description="SAM-dependent MTase PRMT-type" evidence="6">
    <location>
        <begin position="141"/>
        <end position="456"/>
    </location>
</feature>
<feature type="region of interest" description="Disordered" evidence="7">
    <location>
        <begin position="494"/>
        <end position="517"/>
    </location>
</feature>
<feature type="compositionally biased region" description="Polar residues" evidence="7">
    <location>
        <begin position="507"/>
        <end position="516"/>
    </location>
</feature>
<feature type="active site" evidence="3">
    <location>
        <position position="257"/>
    </location>
</feature>
<feature type="active site" evidence="3">
    <location>
        <position position="266"/>
    </location>
</feature>
<feature type="binding site" evidence="3">
    <location>
        <position position="158"/>
    </location>
    <ligand>
        <name>S-adenosyl-L-methionine</name>
        <dbReference type="ChEBI" id="CHEBI:59789"/>
    </ligand>
</feature>
<feature type="binding site" evidence="3">
    <location>
        <position position="167"/>
    </location>
    <ligand>
        <name>S-adenosyl-L-methionine</name>
        <dbReference type="ChEBI" id="CHEBI:59789"/>
    </ligand>
</feature>
<feature type="binding site" evidence="3">
    <location>
        <position position="191"/>
    </location>
    <ligand>
        <name>S-adenosyl-L-methionine</name>
        <dbReference type="ChEBI" id="CHEBI:59789"/>
    </ligand>
</feature>
<feature type="binding site" evidence="3">
    <location>
        <position position="213"/>
    </location>
    <ligand>
        <name>S-adenosyl-L-methionine</name>
        <dbReference type="ChEBI" id="CHEBI:59789"/>
    </ligand>
</feature>
<feature type="binding site" evidence="3">
    <location>
        <position position="243"/>
    </location>
    <ligand>
        <name>S-adenosyl-L-methionine</name>
        <dbReference type="ChEBI" id="CHEBI:59789"/>
    </ligand>
</feature>
<feature type="binding site" evidence="1">
    <location>
        <position position="271"/>
    </location>
    <ligand>
        <name>S-adenosyl-L-methionine</name>
        <dbReference type="ChEBI" id="CHEBI:59789"/>
    </ligand>
</feature>
<feature type="modified residue" description="N-acetylmethionine" evidence="2">
    <location>
        <position position="1"/>
    </location>
</feature>
<feature type="splice variant" id="VSP_027461" description="In isoform 2." evidence="9">
    <location>
        <position position="510"/>
    </location>
</feature>
<feature type="sequence conflict" description="In Ref. 5; BAF00156." evidence="10" ref="5">
    <original>G</original>
    <variation>V</variation>
    <location>
        <position position="127"/>
    </location>
</feature>
<feature type="sequence conflict" description="In Ref. 3; AAO42127." evidence="10" ref="3">
    <original>P</original>
    <variation>Q</variation>
    <location>
        <position position="374"/>
    </location>
</feature>
<feature type="sequence conflict" description="In Ref. 3; AAO42127." evidence="10" ref="3">
    <original>F</original>
    <variation>L</variation>
    <location>
        <position position="377"/>
    </location>
</feature>
<dbReference type="EC" id="2.1.1.319" evidence="4"/>
<dbReference type="EMBL" id="AC016827">
    <property type="protein sequence ID" value="AAF26997.1"/>
    <property type="status" value="ALT_SEQ"/>
    <property type="molecule type" value="Genomic_DNA"/>
</dbReference>
<dbReference type="EMBL" id="CP002686">
    <property type="protein sequence ID" value="AEE74477.1"/>
    <property type="molecule type" value="Genomic_DNA"/>
</dbReference>
<dbReference type="EMBL" id="CP002686">
    <property type="protein sequence ID" value="AEE74478.1"/>
    <property type="molecule type" value="Genomic_DNA"/>
</dbReference>
<dbReference type="EMBL" id="BT004102">
    <property type="protein sequence ID" value="AAO42127.1"/>
    <property type="molecule type" value="mRNA"/>
</dbReference>
<dbReference type="EMBL" id="BT015414">
    <property type="protein sequence ID" value="AAU05537.1"/>
    <property type="molecule type" value="mRNA"/>
</dbReference>
<dbReference type="EMBL" id="AK228202">
    <property type="protein sequence ID" value="BAF00156.1"/>
    <property type="status" value="ALT_SEQ"/>
    <property type="molecule type" value="mRNA"/>
</dbReference>
<dbReference type="RefSeq" id="NP_187349.2">
    <molecule id="Q84W92-3"/>
    <property type="nucleotide sequence ID" value="NM_111573.5"/>
</dbReference>
<dbReference type="RefSeq" id="NP_850528.1">
    <molecule id="Q84W92-1"/>
    <property type="nucleotide sequence ID" value="NM_180197.2"/>
</dbReference>
<dbReference type="SMR" id="Q84W92"/>
<dbReference type="BioGRID" id="5213">
    <property type="interactions" value="4"/>
</dbReference>
<dbReference type="FunCoup" id="Q84W92">
    <property type="interactions" value="3364"/>
</dbReference>
<dbReference type="IntAct" id="Q84W92">
    <property type="interactions" value="1"/>
</dbReference>
<dbReference type="STRING" id="3702.Q84W92"/>
<dbReference type="iPTMnet" id="Q84W92"/>
<dbReference type="PaxDb" id="3702-AT3G06930.2"/>
<dbReference type="ProteomicsDB" id="245004">
    <molecule id="Q84W92-1"/>
</dbReference>
<dbReference type="EnsemblPlants" id="AT3G06930.1">
    <molecule id="Q84W92-3"/>
    <property type="protein sequence ID" value="AT3G06930.1"/>
    <property type="gene ID" value="AT3G06930"/>
</dbReference>
<dbReference type="EnsemblPlants" id="AT3G06930.2">
    <molecule id="Q84W92-1"/>
    <property type="protein sequence ID" value="AT3G06930.2"/>
    <property type="gene ID" value="AT3G06930"/>
</dbReference>
<dbReference type="GeneID" id="819878"/>
<dbReference type="Gramene" id="AT3G06930.1">
    <molecule id="Q84W92-3"/>
    <property type="protein sequence ID" value="AT3G06930.1"/>
    <property type="gene ID" value="AT3G06930"/>
</dbReference>
<dbReference type="Gramene" id="AT3G06930.2">
    <molecule id="Q84W92-1"/>
    <property type="protein sequence ID" value="AT3G06930.2"/>
    <property type="gene ID" value="AT3G06930"/>
</dbReference>
<dbReference type="KEGG" id="ath:AT3G06930"/>
<dbReference type="Araport" id="AT3G06930"/>
<dbReference type="TAIR" id="AT3G06930">
    <property type="gene designation" value="PRMT4B"/>
</dbReference>
<dbReference type="eggNOG" id="KOG1500">
    <property type="taxonomic scope" value="Eukaryota"/>
</dbReference>
<dbReference type="HOGENOM" id="CLU_017375_0_2_1"/>
<dbReference type="InParanoid" id="Q84W92"/>
<dbReference type="OMA" id="CMVEGSD"/>
<dbReference type="OrthoDB" id="7848332at2759"/>
<dbReference type="PhylomeDB" id="Q84W92"/>
<dbReference type="PRO" id="PR:Q84W92"/>
<dbReference type="Proteomes" id="UP000006548">
    <property type="component" value="Chromosome 3"/>
</dbReference>
<dbReference type="ExpressionAtlas" id="Q84W92">
    <property type="expression patterns" value="baseline and differential"/>
</dbReference>
<dbReference type="GO" id="GO:0005737">
    <property type="term" value="C:cytoplasm"/>
    <property type="evidence" value="ECO:0000314"/>
    <property type="project" value="TAIR"/>
</dbReference>
<dbReference type="GO" id="GO:0005829">
    <property type="term" value="C:cytosol"/>
    <property type="evidence" value="ECO:0007005"/>
    <property type="project" value="TAIR"/>
</dbReference>
<dbReference type="GO" id="GO:0005634">
    <property type="term" value="C:nucleus"/>
    <property type="evidence" value="ECO:0000314"/>
    <property type="project" value="UniProtKB"/>
</dbReference>
<dbReference type="GO" id="GO:0008469">
    <property type="term" value="F:histone arginine N-methyltransferase activity"/>
    <property type="evidence" value="ECO:0000314"/>
    <property type="project" value="TAIR"/>
</dbReference>
<dbReference type="GO" id="GO:0046982">
    <property type="term" value="F:protein heterodimerization activity"/>
    <property type="evidence" value="ECO:0000353"/>
    <property type="project" value="TAIR"/>
</dbReference>
<dbReference type="GO" id="GO:0042803">
    <property type="term" value="F:protein homodimerization activity"/>
    <property type="evidence" value="ECO:0000353"/>
    <property type="project" value="TAIR"/>
</dbReference>
<dbReference type="GO" id="GO:0035242">
    <property type="term" value="F:protein-arginine omega-N asymmetric methyltransferase activity"/>
    <property type="evidence" value="ECO:0000314"/>
    <property type="project" value="TAIR"/>
</dbReference>
<dbReference type="GO" id="GO:0035241">
    <property type="term" value="F:protein-arginine omega-N monomethyltransferase activity"/>
    <property type="evidence" value="ECO:0000314"/>
    <property type="project" value="TAIR"/>
</dbReference>
<dbReference type="GO" id="GO:0040029">
    <property type="term" value="P:epigenetic regulation of gene expression"/>
    <property type="evidence" value="ECO:0000315"/>
    <property type="project" value="UniProtKB"/>
</dbReference>
<dbReference type="GO" id="GO:0019919">
    <property type="term" value="P:peptidyl-arginine methylation, to asymmetrical-dimethyl arginine"/>
    <property type="evidence" value="ECO:0000314"/>
    <property type="project" value="TAIR"/>
</dbReference>
<dbReference type="GO" id="GO:0045893">
    <property type="term" value="P:positive regulation of DNA-templated transcription"/>
    <property type="evidence" value="ECO:0000315"/>
    <property type="project" value="UniProtKB"/>
</dbReference>
<dbReference type="GO" id="GO:1902884">
    <property type="term" value="P:positive regulation of response to oxidative stress"/>
    <property type="evidence" value="ECO:0000315"/>
    <property type="project" value="UniProtKB"/>
</dbReference>
<dbReference type="GO" id="GO:0009909">
    <property type="term" value="P:regulation of flower development"/>
    <property type="evidence" value="ECO:0000316"/>
    <property type="project" value="TAIR"/>
</dbReference>
<dbReference type="GO" id="GO:0046686">
    <property type="term" value="P:response to cadmium ion"/>
    <property type="evidence" value="ECO:0000315"/>
    <property type="project" value="UniProtKB"/>
</dbReference>
<dbReference type="GO" id="GO:0009651">
    <property type="term" value="P:response to salt stress"/>
    <property type="evidence" value="ECO:0000315"/>
    <property type="project" value="UniProtKB"/>
</dbReference>
<dbReference type="GO" id="GO:0010228">
    <property type="term" value="P:vegetative to reproductive phase transition of meristem"/>
    <property type="evidence" value="ECO:0000316"/>
    <property type="project" value="TAIR"/>
</dbReference>
<dbReference type="CDD" id="cd02440">
    <property type="entry name" value="AdoMet_MTases"/>
    <property type="match status" value="1"/>
</dbReference>
<dbReference type="FunFam" id="2.70.160.11:FF:000002">
    <property type="entry name" value="Probable histone-arginine methyltransferase CARM1"/>
    <property type="match status" value="1"/>
</dbReference>
<dbReference type="FunFam" id="3.40.50.150:FF:000052">
    <property type="entry name" value="Probable histone-arginine methyltransferase CARM1"/>
    <property type="match status" value="1"/>
</dbReference>
<dbReference type="Gene3D" id="2.70.160.11">
    <property type="entry name" value="Hnrnp arginine n-methyltransferase1"/>
    <property type="match status" value="1"/>
</dbReference>
<dbReference type="Gene3D" id="3.40.50.150">
    <property type="entry name" value="Vaccinia Virus protein VP39"/>
    <property type="match status" value="1"/>
</dbReference>
<dbReference type="InterPro" id="IPR025799">
    <property type="entry name" value="Arg_MeTrfase"/>
</dbReference>
<dbReference type="InterPro" id="IPR055135">
    <property type="entry name" value="PRMT_dom"/>
</dbReference>
<dbReference type="InterPro" id="IPR029063">
    <property type="entry name" value="SAM-dependent_MTases_sf"/>
</dbReference>
<dbReference type="PANTHER" id="PTHR11006:SF10">
    <property type="entry name" value="HISTONE-ARGININE METHYLTRANSFERASE CARMER-RELATED"/>
    <property type="match status" value="1"/>
</dbReference>
<dbReference type="PANTHER" id="PTHR11006">
    <property type="entry name" value="PROTEIN ARGININE N-METHYLTRANSFERASE"/>
    <property type="match status" value="1"/>
</dbReference>
<dbReference type="Pfam" id="PF25350">
    <property type="entry name" value="PH_PRMT_N"/>
    <property type="match status" value="1"/>
</dbReference>
<dbReference type="Pfam" id="PF06325">
    <property type="entry name" value="PrmA"/>
    <property type="match status" value="1"/>
</dbReference>
<dbReference type="Pfam" id="PF22528">
    <property type="entry name" value="PRMT_C"/>
    <property type="match status" value="1"/>
</dbReference>
<dbReference type="SUPFAM" id="SSF53335">
    <property type="entry name" value="S-adenosyl-L-methionine-dependent methyltransferases"/>
    <property type="match status" value="1"/>
</dbReference>
<dbReference type="PROSITE" id="PS51678">
    <property type="entry name" value="SAM_MT_PRMT"/>
    <property type="match status" value="1"/>
</dbReference>
<reference key="1">
    <citation type="journal article" date="2000" name="Nature">
        <title>Sequence and analysis of chromosome 3 of the plant Arabidopsis thaliana.</title>
        <authorList>
            <person name="Salanoubat M."/>
            <person name="Lemcke K."/>
            <person name="Rieger M."/>
            <person name="Ansorge W."/>
            <person name="Unseld M."/>
            <person name="Fartmann B."/>
            <person name="Valle G."/>
            <person name="Bloecker H."/>
            <person name="Perez-Alonso M."/>
            <person name="Obermaier B."/>
            <person name="Delseny M."/>
            <person name="Boutry M."/>
            <person name="Grivell L.A."/>
            <person name="Mache R."/>
            <person name="Puigdomenech P."/>
            <person name="De Simone V."/>
            <person name="Choisne N."/>
            <person name="Artiguenave F."/>
            <person name="Robert C."/>
            <person name="Brottier P."/>
            <person name="Wincker P."/>
            <person name="Cattolico L."/>
            <person name="Weissenbach J."/>
            <person name="Saurin W."/>
            <person name="Quetier F."/>
            <person name="Schaefer M."/>
            <person name="Mueller-Auer S."/>
            <person name="Gabel C."/>
            <person name="Fuchs M."/>
            <person name="Benes V."/>
            <person name="Wurmbach E."/>
            <person name="Drzonek H."/>
            <person name="Erfle H."/>
            <person name="Jordan N."/>
            <person name="Bangert S."/>
            <person name="Wiedelmann R."/>
            <person name="Kranz H."/>
            <person name="Voss H."/>
            <person name="Holland R."/>
            <person name="Brandt P."/>
            <person name="Nyakatura G."/>
            <person name="Vezzi A."/>
            <person name="D'Angelo M."/>
            <person name="Pallavicini A."/>
            <person name="Toppo S."/>
            <person name="Simionati B."/>
            <person name="Conrad A."/>
            <person name="Hornischer K."/>
            <person name="Kauer G."/>
            <person name="Loehnert T.-H."/>
            <person name="Nordsiek G."/>
            <person name="Reichelt J."/>
            <person name="Scharfe M."/>
            <person name="Schoen O."/>
            <person name="Bargues M."/>
            <person name="Terol J."/>
            <person name="Climent J."/>
            <person name="Navarro P."/>
            <person name="Collado C."/>
            <person name="Perez-Perez A."/>
            <person name="Ottenwaelder B."/>
            <person name="Duchemin D."/>
            <person name="Cooke R."/>
            <person name="Laudie M."/>
            <person name="Berger-Llauro C."/>
            <person name="Purnelle B."/>
            <person name="Masuy D."/>
            <person name="de Haan M."/>
            <person name="Maarse A.C."/>
            <person name="Alcaraz J.-P."/>
            <person name="Cottet A."/>
            <person name="Casacuberta E."/>
            <person name="Monfort A."/>
            <person name="Argiriou A."/>
            <person name="Flores M."/>
            <person name="Liguori R."/>
            <person name="Vitale D."/>
            <person name="Mannhaupt G."/>
            <person name="Haase D."/>
            <person name="Schoof H."/>
            <person name="Rudd S."/>
            <person name="Zaccaria P."/>
            <person name="Mewes H.-W."/>
            <person name="Mayer K.F.X."/>
            <person name="Kaul S."/>
            <person name="Town C.D."/>
            <person name="Koo H.L."/>
            <person name="Tallon L.J."/>
            <person name="Jenkins J."/>
            <person name="Rooney T."/>
            <person name="Rizzo M."/>
            <person name="Walts A."/>
            <person name="Utterback T."/>
            <person name="Fujii C.Y."/>
            <person name="Shea T.P."/>
            <person name="Creasy T.H."/>
            <person name="Haas B."/>
            <person name="Maiti R."/>
            <person name="Wu D."/>
            <person name="Peterson J."/>
            <person name="Van Aken S."/>
            <person name="Pai G."/>
            <person name="Militscher J."/>
            <person name="Sellers P."/>
            <person name="Gill J.E."/>
            <person name="Feldblyum T.V."/>
            <person name="Preuss D."/>
            <person name="Lin X."/>
            <person name="Nierman W.C."/>
            <person name="Salzberg S.L."/>
            <person name="White O."/>
            <person name="Venter J.C."/>
            <person name="Fraser C.M."/>
            <person name="Kaneko T."/>
            <person name="Nakamura Y."/>
            <person name="Sato S."/>
            <person name="Kato T."/>
            <person name="Asamizu E."/>
            <person name="Sasamoto S."/>
            <person name="Kimura T."/>
            <person name="Idesawa K."/>
            <person name="Kawashima K."/>
            <person name="Kishida Y."/>
            <person name="Kiyokawa C."/>
            <person name="Kohara M."/>
            <person name="Matsumoto M."/>
            <person name="Matsuno A."/>
            <person name="Muraki A."/>
            <person name="Nakayama S."/>
            <person name="Nakazaki N."/>
            <person name="Shinpo S."/>
            <person name="Takeuchi C."/>
            <person name="Wada T."/>
            <person name="Watanabe A."/>
            <person name="Yamada M."/>
            <person name="Yasuda M."/>
            <person name="Tabata S."/>
        </authorList>
    </citation>
    <scope>NUCLEOTIDE SEQUENCE [LARGE SCALE GENOMIC DNA]</scope>
    <source>
        <strain>cv. Columbia</strain>
    </source>
</reference>
<reference key="2">
    <citation type="journal article" date="2017" name="Plant J.">
        <title>Araport11: a complete reannotation of the Arabidopsis thaliana reference genome.</title>
        <authorList>
            <person name="Cheng C.Y."/>
            <person name="Krishnakumar V."/>
            <person name="Chan A.P."/>
            <person name="Thibaud-Nissen F."/>
            <person name="Schobel S."/>
            <person name="Town C.D."/>
        </authorList>
    </citation>
    <scope>GENOME REANNOTATION</scope>
    <source>
        <strain>cv. Columbia</strain>
    </source>
</reference>
<reference key="3">
    <citation type="journal article" date="2003" name="Science">
        <title>Empirical analysis of transcriptional activity in the Arabidopsis genome.</title>
        <authorList>
            <person name="Yamada K."/>
            <person name="Lim J."/>
            <person name="Dale J.M."/>
            <person name="Chen H."/>
            <person name="Shinn P."/>
            <person name="Palm C.J."/>
            <person name="Southwick A.M."/>
            <person name="Wu H.C."/>
            <person name="Kim C.J."/>
            <person name="Nguyen M."/>
            <person name="Pham P.K."/>
            <person name="Cheuk R.F."/>
            <person name="Karlin-Newmann G."/>
            <person name="Liu S.X."/>
            <person name="Lam B."/>
            <person name="Sakano H."/>
            <person name="Wu T."/>
            <person name="Yu G."/>
            <person name="Miranda M."/>
            <person name="Quach H.L."/>
            <person name="Tripp M."/>
            <person name="Chang C.H."/>
            <person name="Lee J.M."/>
            <person name="Toriumi M.J."/>
            <person name="Chan M.M."/>
            <person name="Tang C.C."/>
            <person name="Onodera C.S."/>
            <person name="Deng J.M."/>
            <person name="Akiyama K."/>
            <person name="Ansari Y."/>
            <person name="Arakawa T."/>
            <person name="Banh J."/>
            <person name="Banno F."/>
            <person name="Bowser L."/>
            <person name="Brooks S.Y."/>
            <person name="Carninci P."/>
            <person name="Chao Q."/>
            <person name="Choy N."/>
            <person name="Enju A."/>
            <person name="Goldsmith A.D."/>
            <person name="Gurjal M."/>
            <person name="Hansen N.F."/>
            <person name="Hayashizaki Y."/>
            <person name="Johnson-Hopson C."/>
            <person name="Hsuan V.W."/>
            <person name="Iida K."/>
            <person name="Karnes M."/>
            <person name="Khan S."/>
            <person name="Koesema E."/>
            <person name="Ishida J."/>
            <person name="Jiang P.X."/>
            <person name="Jones T."/>
            <person name="Kawai J."/>
            <person name="Kamiya A."/>
            <person name="Meyers C."/>
            <person name="Nakajima M."/>
            <person name="Narusaka M."/>
            <person name="Seki M."/>
            <person name="Sakurai T."/>
            <person name="Satou M."/>
            <person name="Tamse R."/>
            <person name="Vaysberg M."/>
            <person name="Wallender E.K."/>
            <person name="Wong C."/>
            <person name="Yamamura Y."/>
            <person name="Yuan S."/>
            <person name="Shinozaki K."/>
            <person name="Davis R.W."/>
            <person name="Theologis A."/>
            <person name="Ecker J.R."/>
        </authorList>
    </citation>
    <scope>NUCLEOTIDE SEQUENCE [LARGE SCALE MRNA] (ISOFORM 1)</scope>
    <source>
        <strain>cv. Columbia</strain>
    </source>
</reference>
<reference key="4">
    <citation type="submission" date="2004-08" db="EMBL/GenBank/DDBJ databases">
        <title>Arabidopsis ORF clones.</title>
        <authorList>
            <person name="Cheuk R.F."/>
            <person name="Chen H."/>
            <person name="Kim C.J."/>
            <person name="Shinn P."/>
            <person name="Ecker J.R."/>
        </authorList>
    </citation>
    <scope>NUCLEOTIDE SEQUENCE [LARGE SCALE MRNA] (ISOFORM 2)</scope>
    <source>
        <strain>cv. Columbia</strain>
    </source>
</reference>
<reference key="5">
    <citation type="submission" date="2006-07" db="EMBL/GenBank/DDBJ databases">
        <title>Large-scale analysis of RIKEN Arabidopsis full-length (RAFL) cDNAs.</title>
        <authorList>
            <person name="Totoki Y."/>
            <person name="Seki M."/>
            <person name="Ishida J."/>
            <person name="Nakajima M."/>
            <person name="Enju A."/>
            <person name="Kamiya A."/>
            <person name="Narusaka M."/>
            <person name="Shin-i T."/>
            <person name="Nakagawa M."/>
            <person name="Sakamoto N."/>
            <person name="Oishi K."/>
            <person name="Kohara Y."/>
            <person name="Kobayashi M."/>
            <person name="Toyoda A."/>
            <person name="Sakaki Y."/>
            <person name="Sakurai T."/>
            <person name="Iida K."/>
            <person name="Akiyama K."/>
            <person name="Satou M."/>
            <person name="Toyoda T."/>
            <person name="Konagaya A."/>
            <person name="Carninci P."/>
            <person name="Kawai J."/>
            <person name="Hayashizaki Y."/>
            <person name="Shinozaki K."/>
        </authorList>
    </citation>
    <scope>NUCLEOTIDE SEQUENCE [LARGE SCALE MRNA]</scope>
    <source>
        <strain>cv. Columbia</strain>
    </source>
</reference>
<reference key="6">
    <citation type="journal article" date="2007" name="Pharmacol. Ther.">
        <title>Protein arginine methyltransferases: evolution and assessment of their pharmacological and therapeutic potential.</title>
        <authorList>
            <person name="Krause C.D."/>
            <person name="Yang Z.-H."/>
            <person name="Kim Y.-S."/>
            <person name="Lee J.-H."/>
            <person name="Cook J.R."/>
            <person name="Pestka S."/>
        </authorList>
    </citation>
    <scope>GENE FAMILY</scope>
    <scope>NOMENCLATURE</scope>
</reference>
<reference key="7">
    <citation type="journal article" date="2016" name="PLoS Genet.">
        <title>PARAQUAT TOLERANCE3 is an E3 ligase that switches off activated oxidative response by targeting histone-modifying PROTEIN METHYLTRANSFERASE4b.</title>
        <authorList>
            <person name="Luo C."/>
            <person name="Cai X.-T."/>
            <person name="Du J."/>
            <person name="Zhao T.-L."/>
            <person name="Wang P.-F."/>
            <person name="Zhao P.-X."/>
            <person name="Liu R."/>
            <person name="Xie Q."/>
            <person name="Cao X.-F."/>
            <person name="Xiang C.-B."/>
        </authorList>
    </citation>
    <scope>FUNCTION</scope>
    <scope>DISRUPTION PHENOTYPE</scope>
    <scope>INTERACTION WITH PQT3</scope>
    <scope>REPRESSION BY PQT3</scope>
    <scope>INDUCTION BY MG132</scope>
    <scope>SUBCELLULAR LOCATION</scope>
    <scope>UBIQUITINATION BY PQT3</scope>
    <source>
        <strain>cv. Columbia</strain>
    </source>
</reference>
<protein>
    <recommendedName>
        <fullName>Probable histone-arginine methyltransferase 1.3</fullName>
        <shortName>AtPRMT13</shortName>
        <ecNumber evidence="4">2.1.1.319</ecNumber>
    </recommendedName>
    <alternativeName>
        <fullName>Coactivator-associated methyltransferase 1A</fullName>
    </alternativeName>
    <alternativeName>
        <fullName>Protein arginine N-methyltransferase 4B</fullName>
        <shortName>AtPRMT4B</shortName>
    </alternativeName>
</protein>
<evidence type="ECO:0000250" key="1"/>
<evidence type="ECO:0000250" key="2">
    <source>
        <dbReference type="UniProtKB" id="A3KPF2"/>
    </source>
</evidence>
<evidence type="ECO:0000250" key="3">
    <source>
        <dbReference type="UniProtKB" id="Q63009"/>
    </source>
</evidence>
<evidence type="ECO:0000250" key="4">
    <source>
        <dbReference type="UniProtKB" id="Q99873"/>
    </source>
</evidence>
<evidence type="ECO:0000250" key="5">
    <source>
        <dbReference type="UniProtKB" id="Q9WVG6"/>
    </source>
</evidence>
<evidence type="ECO:0000255" key="6">
    <source>
        <dbReference type="PROSITE-ProRule" id="PRU01015"/>
    </source>
</evidence>
<evidence type="ECO:0000256" key="7">
    <source>
        <dbReference type="SAM" id="MobiDB-lite"/>
    </source>
</evidence>
<evidence type="ECO:0000269" key="8">
    <source>
    </source>
</evidence>
<evidence type="ECO:0000303" key="9">
    <source ref="4"/>
</evidence>
<evidence type="ECO:0000305" key="10"/>
<evidence type="ECO:0000312" key="11">
    <source>
        <dbReference type="Araport" id="AT3G06930"/>
    </source>
</evidence>
<evidence type="ECO:0000312" key="12">
    <source>
        <dbReference type="EMBL" id="AAF26997.1"/>
    </source>
</evidence>